<proteinExistence type="inferred from homology"/>
<keyword id="KW-0004">4Fe-4S</keyword>
<keyword id="KW-0028">Amino-acid biosynthesis</keyword>
<keyword id="KW-0100">Branched-chain amino acid biosynthesis</keyword>
<keyword id="KW-0408">Iron</keyword>
<keyword id="KW-0411">Iron-sulfur</keyword>
<keyword id="KW-0432">Leucine biosynthesis</keyword>
<keyword id="KW-0456">Lyase</keyword>
<keyword id="KW-0479">Metal-binding</keyword>
<name>LEUC_LEPIC</name>
<protein>
    <recommendedName>
        <fullName evidence="1">3-isopropylmalate dehydratase large subunit</fullName>
        <ecNumber evidence="1">4.2.1.33</ecNumber>
    </recommendedName>
    <alternativeName>
        <fullName evidence="1">Alpha-IPM isomerase</fullName>
        <shortName evidence="1">IPMI</shortName>
    </alternativeName>
    <alternativeName>
        <fullName evidence="1">Isopropylmalate isomerase</fullName>
    </alternativeName>
</protein>
<accession>Q72RC4</accession>
<comment type="function">
    <text evidence="1">Catalyzes the isomerization between 2-isopropylmalate and 3-isopropylmalate, via the formation of 2-isopropylmaleate.</text>
</comment>
<comment type="catalytic activity">
    <reaction evidence="1">
        <text>(2R,3S)-3-isopropylmalate = (2S)-2-isopropylmalate</text>
        <dbReference type="Rhea" id="RHEA:32287"/>
        <dbReference type="ChEBI" id="CHEBI:1178"/>
        <dbReference type="ChEBI" id="CHEBI:35121"/>
        <dbReference type="EC" id="4.2.1.33"/>
    </reaction>
</comment>
<comment type="cofactor">
    <cofactor evidence="1">
        <name>[4Fe-4S] cluster</name>
        <dbReference type="ChEBI" id="CHEBI:49883"/>
    </cofactor>
    <text evidence="1">Binds 1 [4Fe-4S] cluster per subunit.</text>
</comment>
<comment type="pathway">
    <text evidence="1">Amino-acid biosynthesis; L-leucine biosynthesis; L-leucine from 3-methyl-2-oxobutanoate: step 2/4.</text>
</comment>
<comment type="subunit">
    <text evidence="1">Heterodimer of LeuC and LeuD.</text>
</comment>
<comment type="similarity">
    <text evidence="1">Belongs to the aconitase/IPM isomerase family. LeuC type 1 subfamily.</text>
</comment>
<sequence>MKTMFEKIWEDHLVGELDAGSYLIYIDRHLIHEVTSPQAFEGLKLAGRKVRRPEATFATMDHNVSTRTRDLSLADPVSAIQMQTLKKNCDENGIRVYDFQNPDQGIIHVIAPEMGLTHPGMTIVCGDSHTSTHGAFGALAFGIGTSEVEHVLATQTLVQKRAKTMEIRVDGKLSDKVTAKDIILAIIGKIGTAGATGYVIEYRGSAIQALSMEARMTICNMSIEAGARAGLIAPDETTFNYIQGKDFSPKGVEWDLAVKKWKHYVTDEGAKFDRTVILHADEIAPMVTWGTSPSQVVSIKGVVPDPKDANDPVEKIGIESALKYMDLKSGQKIEDISINKVFIGSCTNSRIEDLRAAAATVKGKKVSSKVQAIVVPGSGRVKRQAEQEGLDKIFTAAGFEWRNPGCSMCLAMNDDVLEPGDRCASTSNRNFEGRQGKGGRTHLVGPEMAAAAAIEGHFVDIRNWK</sequence>
<feature type="chain" id="PRO_0000076756" description="3-isopropylmalate dehydratase large subunit">
    <location>
        <begin position="1"/>
        <end position="465"/>
    </location>
</feature>
<feature type="binding site" evidence="1">
    <location>
        <position position="346"/>
    </location>
    <ligand>
        <name>[4Fe-4S] cluster</name>
        <dbReference type="ChEBI" id="CHEBI:49883"/>
    </ligand>
</feature>
<feature type="binding site" evidence="1">
    <location>
        <position position="406"/>
    </location>
    <ligand>
        <name>[4Fe-4S] cluster</name>
        <dbReference type="ChEBI" id="CHEBI:49883"/>
    </ligand>
</feature>
<feature type="binding site" evidence="1">
    <location>
        <position position="409"/>
    </location>
    <ligand>
        <name>[4Fe-4S] cluster</name>
        <dbReference type="ChEBI" id="CHEBI:49883"/>
    </ligand>
</feature>
<evidence type="ECO:0000255" key="1">
    <source>
        <dbReference type="HAMAP-Rule" id="MF_01026"/>
    </source>
</evidence>
<organism>
    <name type="scientific">Leptospira interrogans serogroup Icterohaemorrhagiae serovar copenhageni (strain Fiocruz L1-130)</name>
    <dbReference type="NCBI Taxonomy" id="267671"/>
    <lineage>
        <taxon>Bacteria</taxon>
        <taxon>Pseudomonadati</taxon>
        <taxon>Spirochaetota</taxon>
        <taxon>Spirochaetia</taxon>
        <taxon>Leptospirales</taxon>
        <taxon>Leptospiraceae</taxon>
        <taxon>Leptospira</taxon>
    </lineage>
</organism>
<reference key="1">
    <citation type="journal article" date="2004" name="J. Bacteriol.">
        <title>Comparative genomics of two Leptospira interrogans serovars reveals novel insights into physiology and pathogenesis.</title>
        <authorList>
            <person name="Nascimento A.L.T.O."/>
            <person name="Ko A.I."/>
            <person name="Martins E.A.L."/>
            <person name="Monteiro-Vitorello C.B."/>
            <person name="Ho P.L."/>
            <person name="Haake D.A."/>
            <person name="Verjovski-Almeida S."/>
            <person name="Hartskeerl R.A."/>
            <person name="Marques M.V."/>
            <person name="Oliveira M.C."/>
            <person name="Menck C.F.M."/>
            <person name="Leite L.C.C."/>
            <person name="Carrer H."/>
            <person name="Coutinho L.L."/>
            <person name="Degrave W.M."/>
            <person name="Dellagostin O.A."/>
            <person name="El-Dorry H."/>
            <person name="Ferro E.S."/>
            <person name="Ferro M.I.T."/>
            <person name="Furlan L.R."/>
            <person name="Gamberini M."/>
            <person name="Giglioti E.A."/>
            <person name="Goes-Neto A."/>
            <person name="Goldman G.H."/>
            <person name="Goldman M.H.S."/>
            <person name="Harakava R."/>
            <person name="Jeronimo S.M.B."/>
            <person name="Junqueira-de-Azevedo I.L.M."/>
            <person name="Kimura E.T."/>
            <person name="Kuramae E.E."/>
            <person name="Lemos E.G.M."/>
            <person name="Lemos M.V.F."/>
            <person name="Marino C.L."/>
            <person name="Nunes L.R."/>
            <person name="de Oliveira R.C."/>
            <person name="Pereira G.G."/>
            <person name="Reis M.S."/>
            <person name="Schriefer A."/>
            <person name="Siqueira W.J."/>
            <person name="Sommer P."/>
            <person name="Tsai S.M."/>
            <person name="Simpson A.J.G."/>
            <person name="Ferro J.A."/>
            <person name="Camargo L.E.A."/>
            <person name="Kitajima J.P."/>
            <person name="Setubal J.C."/>
            <person name="Van Sluys M.A."/>
        </authorList>
    </citation>
    <scope>NUCLEOTIDE SEQUENCE [LARGE SCALE GENOMIC DNA]</scope>
    <source>
        <strain>Fiocruz L1-130</strain>
    </source>
</reference>
<dbReference type="EC" id="4.2.1.33" evidence="1"/>
<dbReference type="EMBL" id="AE016823">
    <property type="protein sequence ID" value="AAS70410.1"/>
    <property type="molecule type" value="Genomic_DNA"/>
</dbReference>
<dbReference type="RefSeq" id="WP_000855526.1">
    <property type="nucleotide sequence ID" value="NC_005823.1"/>
</dbReference>
<dbReference type="SMR" id="Q72RC4"/>
<dbReference type="GeneID" id="61141718"/>
<dbReference type="KEGG" id="lic:LIC_11822"/>
<dbReference type="HOGENOM" id="CLU_006714_3_4_12"/>
<dbReference type="UniPathway" id="UPA00048">
    <property type="reaction ID" value="UER00071"/>
</dbReference>
<dbReference type="Proteomes" id="UP000007037">
    <property type="component" value="Chromosome I"/>
</dbReference>
<dbReference type="GO" id="GO:0003861">
    <property type="term" value="F:3-isopropylmalate dehydratase activity"/>
    <property type="evidence" value="ECO:0007669"/>
    <property type="project" value="UniProtKB-UniRule"/>
</dbReference>
<dbReference type="GO" id="GO:0051539">
    <property type="term" value="F:4 iron, 4 sulfur cluster binding"/>
    <property type="evidence" value="ECO:0007669"/>
    <property type="project" value="UniProtKB-KW"/>
</dbReference>
<dbReference type="GO" id="GO:0046872">
    <property type="term" value="F:metal ion binding"/>
    <property type="evidence" value="ECO:0007669"/>
    <property type="project" value="UniProtKB-KW"/>
</dbReference>
<dbReference type="GO" id="GO:0009098">
    <property type="term" value="P:L-leucine biosynthetic process"/>
    <property type="evidence" value="ECO:0007669"/>
    <property type="project" value="UniProtKB-UniRule"/>
</dbReference>
<dbReference type="CDD" id="cd01583">
    <property type="entry name" value="IPMI"/>
    <property type="match status" value="1"/>
</dbReference>
<dbReference type="FunFam" id="3.30.499.10:FF:000007">
    <property type="entry name" value="3-isopropylmalate dehydratase large subunit"/>
    <property type="match status" value="1"/>
</dbReference>
<dbReference type="Gene3D" id="3.30.499.10">
    <property type="entry name" value="Aconitase, domain 3"/>
    <property type="match status" value="2"/>
</dbReference>
<dbReference type="HAMAP" id="MF_01026">
    <property type="entry name" value="LeuC_type1"/>
    <property type="match status" value="1"/>
</dbReference>
<dbReference type="InterPro" id="IPR004430">
    <property type="entry name" value="3-IsopropMal_deHydase_lsu"/>
</dbReference>
<dbReference type="InterPro" id="IPR015931">
    <property type="entry name" value="Acnase/IPM_dHydase_lsu_aba_1/3"/>
</dbReference>
<dbReference type="InterPro" id="IPR001030">
    <property type="entry name" value="Acoase/IPM_deHydtase_lsu_aba"/>
</dbReference>
<dbReference type="InterPro" id="IPR018136">
    <property type="entry name" value="Aconitase_4Fe-4S_BS"/>
</dbReference>
<dbReference type="InterPro" id="IPR036008">
    <property type="entry name" value="Aconitase_4Fe-4S_dom"/>
</dbReference>
<dbReference type="InterPro" id="IPR050067">
    <property type="entry name" value="IPM_dehydratase_rel_enz"/>
</dbReference>
<dbReference type="InterPro" id="IPR033941">
    <property type="entry name" value="IPMI_cat"/>
</dbReference>
<dbReference type="NCBIfam" id="TIGR00170">
    <property type="entry name" value="leuC"/>
    <property type="match status" value="1"/>
</dbReference>
<dbReference type="NCBIfam" id="NF004016">
    <property type="entry name" value="PRK05478.1"/>
    <property type="match status" value="1"/>
</dbReference>
<dbReference type="NCBIfam" id="NF009116">
    <property type="entry name" value="PRK12466.1"/>
    <property type="match status" value="1"/>
</dbReference>
<dbReference type="PANTHER" id="PTHR43822:SF9">
    <property type="entry name" value="3-ISOPROPYLMALATE DEHYDRATASE"/>
    <property type="match status" value="1"/>
</dbReference>
<dbReference type="PANTHER" id="PTHR43822">
    <property type="entry name" value="HOMOACONITASE, MITOCHONDRIAL-RELATED"/>
    <property type="match status" value="1"/>
</dbReference>
<dbReference type="Pfam" id="PF00330">
    <property type="entry name" value="Aconitase"/>
    <property type="match status" value="1"/>
</dbReference>
<dbReference type="PRINTS" id="PR00415">
    <property type="entry name" value="ACONITASE"/>
</dbReference>
<dbReference type="SUPFAM" id="SSF53732">
    <property type="entry name" value="Aconitase iron-sulfur domain"/>
    <property type="match status" value="1"/>
</dbReference>
<dbReference type="PROSITE" id="PS00450">
    <property type="entry name" value="ACONITASE_1"/>
    <property type="match status" value="1"/>
</dbReference>
<dbReference type="PROSITE" id="PS01244">
    <property type="entry name" value="ACONITASE_2"/>
    <property type="match status" value="1"/>
</dbReference>
<gene>
    <name evidence="1" type="primary">leuC</name>
    <name type="ordered locus">LIC_11822</name>
</gene>